<keyword id="KW-0963">Cytoplasm</keyword>
<keyword id="KW-1185">Reference proteome</keyword>
<keyword id="KW-0690">Ribosome biogenesis</keyword>
<protein>
    <recommendedName>
        <fullName evidence="1">Ribosome maturation factor RimP</fullName>
    </recommendedName>
</protein>
<sequence>MTEQVQANEAETLAAGADERIIRETGIDAKVASIIEPVINTLGFRLVRVRLSGLNGQTLQIMAERPDGTMTVDDCELVSRTVAPVLDVEDPISGKYHLEISSPGIDRPLVRKSDFADWAGHIAKVETSVVHEGRKKFRGRIVLGDAESVVIESDQISYGSEPVVRIPFDLISDARLVLTDDLIRDALRKDKALREGRIPGDDLGSEEAGEQSDETASGEAEDKE</sequence>
<organism>
    <name type="scientific">Brucella anthropi (strain ATCC 49188 / DSM 6882 / CCUG 24695 / JCM 21032 / LMG 3331 / NBRC 15819 / NCTC 12168 / Alc 37)</name>
    <name type="common">Ochrobactrum anthropi</name>
    <dbReference type="NCBI Taxonomy" id="439375"/>
    <lineage>
        <taxon>Bacteria</taxon>
        <taxon>Pseudomonadati</taxon>
        <taxon>Pseudomonadota</taxon>
        <taxon>Alphaproteobacteria</taxon>
        <taxon>Hyphomicrobiales</taxon>
        <taxon>Brucellaceae</taxon>
        <taxon>Brucella/Ochrobactrum group</taxon>
        <taxon>Brucella</taxon>
    </lineage>
</organism>
<accession>A6WWW8</accession>
<name>RIMP_BRUA4</name>
<comment type="function">
    <text evidence="1">Required for maturation of 30S ribosomal subunits.</text>
</comment>
<comment type="subcellular location">
    <subcellularLocation>
        <location evidence="1">Cytoplasm</location>
    </subcellularLocation>
</comment>
<comment type="similarity">
    <text evidence="1">Belongs to the RimP family.</text>
</comment>
<gene>
    <name evidence="1" type="primary">rimP</name>
    <name type="ordered locus">Oant_0750</name>
</gene>
<reference key="1">
    <citation type="journal article" date="2011" name="J. Bacteriol.">
        <title>Genome of Ochrobactrum anthropi ATCC 49188 T, a versatile opportunistic pathogen and symbiont of several eukaryotic hosts.</title>
        <authorList>
            <person name="Chain P.S."/>
            <person name="Lang D.M."/>
            <person name="Comerci D.J."/>
            <person name="Malfatti S.A."/>
            <person name="Vergez L.M."/>
            <person name="Shin M."/>
            <person name="Ugalde R.A."/>
            <person name="Garcia E."/>
            <person name="Tolmasky M.E."/>
        </authorList>
    </citation>
    <scope>NUCLEOTIDE SEQUENCE [LARGE SCALE GENOMIC DNA]</scope>
    <source>
        <strain>ATCC 49188 / DSM 6882 / CCUG 24695 / JCM 21032 / LMG 3331 / NBRC 15819 / NCTC 12168 / Alc 37</strain>
    </source>
</reference>
<feature type="chain" id="PRO_1000064740" description="Ribosome maturation factor RimP">
    <location>
        <begin position="1"/>
        <end position="224"/>
    </location>
</feature>
<feature type="region of interest" description="Disordered" evidence="2">
    <location>
        <begin position="194"/>
        <end position="224"/>
    </location>
</feature>
<feature type="compositionally biased region" description="Acidic residues" evidence="2">
    <location>
        <begin position="203"/>
        <end position="213"/>
    </location>
</feature>
<proteinExistence type="inferred from homology"/>
<dbReference type="EMBL" id="CP000758">
    <property type="protein sequence ID" value="ABS13472.1"/>
    <property type="molecule type" value="Genomic_DNA"/>
</dbReference>
<dbReference type="RefSeq" id="WP_012090994.1">
    <property type="nucleotide sequence ID" value="NC_009667.1"/>
</dbReference>
<dbReference type="SMR" id="A6WWW8"/>
<dbReference type="STRING" id="439375.Oant_0750"/>
<dbReference type="KEGG" id="oan:Oant_0750"/>
<dbReference type="PATRIC" id="fig|439375.7.peg.792"/>
<dbReference type="eggNOG" id="COG0779">
    <property type="taxonomic scope" value="Bacteria"/>
</dbReference>
<dbReference type="HOGENOM" id="CLU_070525_0_1_5"/>
<dbReference type="PhylomeDB" id="A6WWW8"/>
<dbReference type="Proteomes" id="UP000002301">
    <property type="component" value="Chromosome 1"/>
</dbReference>
<dbReference type="GO" id="GO:0005829">
    <property type="term" value="C:cytosol"/>
    <property type="evidence" value="ECO:0007669"/>
    <property type="project" value="TreeGrafter"/>
</dbReference>
<dbReference type="GO" id="GO:0000028">
    <property type="term" value="P:ribosomal small subunit assembly"/>
    <property type="evidence" value="ECO:0007669"/>
    <property type="project" value="TreeGrafter"/>
</dbReference>
<dbReference type="GO" id="GO:0006412">
    <property type="term" value="P:translation"/>
    <property type="evidence" value="ECO:0007669"/>
    <property type="project" value="TreeGrafter"/>
</dbReference>
<dbReference type="CDD" id="cd01734">
    <property type="entry name" value="YlxS_C"/>
    <property type="match status" value="1"/>
</dbReference>
<dbReference type="Gene3D" id="3.30.300.70">
    <property type="entry name" value="RimP-like superfamily, N-terminal"/>
    <property type="match status" value="1"/>
</dbReference>
<dbReference type="HAMAP" id="MF_01077">
    <property type="entry name" value="RimP"/>
    <property type="match status" value="1"/>
</dbReference>
<dbReference type="InterPro" id="IPR003728">
    <property type="entry name" value="Ribosome_maturation_RimP"/>
</dbReference>
<dbReference type="InterPro" id="IPR028998">
    <property type="entry name" value="RimP_C"/>
</dbReference>
<dbReference type="InterPro" id="IPR036847">
    <property type="entry name" value="RimP_C_sf"/>
</dbReference>
<dbReference type="InterPro" id="IPR028989">
    <property type="entry name" value="RimP_N"/>
</dbReference>
<dbReference type="InterPro" id="IPR035956">
    <property type="entry name" value="RimP_N_sf"/>
</dbReference>
<dbReference type="NCBIfam" id="NF000932">
    <property type="entry name" value="PRK00092.2-5"/>
    <property type="match status" value="1"/>
</dbReference>
<dbReference type="PANTHER" id="PTHR33867">
    <property type="entry name" value="RIBOSOME MATURATION FACTOR RIMP"/>
    <property type="match status" value="1"/>
</dbReference>
<dbReference type="PANTHER" id="PTHR33867:SF1">
    <property type="entry name" value="RIBOSOME MATURATION FACTOR RIMP"/>
    <property type="match status" value="1"/>
</dbReference>
<dbReference type="Pfam" id="PF17384">
    <property type="entry name" value="DUF150_C"/>
    <property type="match status" value="1"/>
</dbReference>
<dbReference type="Pfam" id="PF02576">
    <property type="entry name" value="RimP_N"/>
    <property type="match status" value="1"/>
</dbReference>
<dbReference type="SUPFAM" id="SSF74942">
    <property type="entry name" value="YhbC-like, C-terminal domain"/>
    <property type="match status" value="1"/>
</dbReference>
<dbReference type="SUPFAM" id="SSF75420">
    <property type="entry name" value="YhbC-like, N-terminal domain"/>
    <property type="match status" value="1"/>
</dbReference>
<evidence type="ECO:0000255" key="1">
    <source>
        <dbReference type="HAMAP-Rule" id="MF_01077"/>
    </source>
</evidence>
<evidence type="ECO:0000256" key="2">
    <source>
        <dbReference type="SAM" id="MobiDB-lite"/>
    </source>
</evidence>